<dbReference type="EMBL" id="AAFI02000010">
    <property type="protein sequence ID" value="EAL70691.1"/>
    <property type="molecule type" value="Genomic_DNA"/>
</dbReference>
<dbReference type="EMBL" id="AAFI02000010">
    <property type="protein sequence ID" value="EAL70734.1"/>
    <property type="molecule type" value="Genomic_DNA"/>
</dbReference>
<dbReference type="RefSeq" id="XP_644589.1">
    <property type="nucleotide sequence ID" value="XM_639497.1"/>
</dbReference>
<dbReference type="RefSeq" id="XP_644662.1">
    <property type="nucleotide sequence ID" value="XM_639570.1"/>
</dbReference>
<dbReference type="SMR" id="Q557H3"/>
<dbReference type="FunCoup" id="Q557H3">
    <property type="interactions" value="311"/>
</dbReference>
<dbReference type="STRING" id="44689.Q557H3"/>
<dbReference type="GlyGen" id="Q557H3">
    <property type="glycosylation" value="1 site"/>
</dbReference>
<dbReference type="PaxDb" id="44689-DDB0237526"/>
<dbReference type="EnsemblProtists" id="EAL70691">
    <property type="protein sequence ID" value="EAL70691"/>
    <property type="gene ID" value="DDB_G0273473"/>
</dbReference>
<dbReference type="EnsemblProtists" id="EAL70734">
    <property type="protein sequence ID" value="EAL70734"/>
    <property type="gene ID" value="DDB_G0273559"/>
</dbReference>
<dbReference type="GeneID" id="8618953"/>
<dbReference type="GeneID" id="8619024"/>
<dbReference type="KEGG" id="ddi:DDB_G0273473"/>
<dbReference type="KEGG" id="ddi:DDB_G0273559"/>
<dbReference type="dictyBase" id="DDB_G0273473"/>
<dbReference type="dictyBase" id="DDB_G0273559"/>
<dbReference type="VEuPathDB" id="AmoebaDB:DDB_G0273473"/>
<dbReference type="eggNOG" id="KOG3682">
    <property type="taxonomic scope" value="Eukaryota"/>
</dbReference>
<dbReference type="HOGENOM" id="CLU_012270_0_0_1"/>
<dbReference type="InParanoid" id="Q557H3"/>
<dbReference type="OMA" id="RVEVCKN"/>
<dbReference type="PhylomeDB" id="Q557H3"/>
<dbReference type="Reactome" id="R-DDI-6798695">
    <property type="pathway name" value="Neutrophil degranulation"/>
</dbReference>
<dbReference type="PRO" id="PR:Q557H3"/>
<dbReference type="Proteomes" id="UP000002195">
    <property type="component" value="Chromosome 2"/>
</dbReference>
<dbReference type="GO" id="GO:0005768">
    <property type="term" value="C:endosome"/>
    <property type="evidence" value="ECO:0000318"/>
    <property type="project" value="GO_Central"/>
</dbReference>
<dbReference type="GO" id="GO:0032456">
    <property type="term" value="P:endocytic recycling"/>
    <property type="evidence" value="ECO:0000318"/>
    <property type="project" value="GO_Central"/>
</dbReference>
<dbReference type="GO" id="GO:0015031">
    <property type="term" value="P:protein transport"/>
    <property type="evidence" value="ECO:0007669"/>
    <property type="project" value="UniProtKB-KW"/>
</dbReference>
<dbReference type="InterPro" id="IPR029705">
    <property type="entry name" value="VPS35L"/>
</dbReference>
<dbReference type="PANTHER" id="PTHR13673">
    <property type="entry name" value="ESOPHAGEAL CANCER ASSOCIATED PROTEIN"/>
    <property type="match status" value="1"/>
</dbReference>
<dbReference type="PANTHER" id="PTHR13673:SF0">
    <property type="entry name" value="VPS35 ENDOSOMAL PROTEIN-SORTING FACTOR-LIKE"/>
    <property type="match status" value="1"/>
</dbReference>
<feature type="chain" id="PRO_0000356853" description="VPS35 endosomal protein sorting factor-like">
    <location>
        <begin position="1"/>
        <end position="987"/>
    </location>
</feature>
<feature type="region of interest" description="Disordered" evidence="2">
    <location>
        <begin position="1"/>
        <end position="115"/>
    </location>
</feature>
<feature type="compositionally biased region" description="Low complexity" evidence="2">
    <location>
        <begin position="1"/>
        <end position="23"/>
    </location>
</feature>
<feature type="compositionally biased region" description="Basic and acidic residues" evidence="2">
    <location>
        <begin position="43"/>
        <end position="63"/>
    </location>
</feature>
<feature type="compositionally biased region" description="Low complexity" evidence="2">
    <location>
        <begin position="66"/>
        <end position="111"/>
    </location>
</feature>
<keyword id="KW-0967">Endosome</keyword>
<keyword id="KW-0653">Protein transport</keyword>
<keyword id="KW-1185">Reference proteome</keyword>
<keyword id="KW-0813">Transport</keyword>
<proteinExistence type="inferred from homology"/>
<protein>
    <recommendedName>
        <fullName evidence="3">VPS35 endosomal protein sorting factor-like</fullName>
    </recommendedName>
</protein>
<sequence length="987" mass="112505">MAERQSASSPTPSSPPQQQQQTPQQPPQYLLNSKKNFKVKVLNGREVERHPLNSITKTEDTGKPKQSSLSSNASSLQSAAAAASSSTATTDIDPLNNNNNNNTDIDPLNNPLEKKHDPLSETIATMGGLKLIKENHLTNYVDENFMPWDTLKPSILQQYTSDDSNPIQVSFMSTGTSGKIKIPINRLNKILEELEQDKEDSKSTQFSQPDIIMDLETLHSELLKAWAAEERVRSLKIAIQTAKLLSDTSLIKFYPSKFVIATEILDTFGNLVYDRIKKRLQSSKESKNHEILLKEQAKETCRNWFYKIASIRELLPRLFVEISILKCYEFIQGDVNTEPKQVINRISEMIRGIGNPLVANYIRAYLTRRSFDLCPEYKKFVIQLLKDFVFTQKSYEKSKYLENTLSMYRITLTDYMGLYSPSLEWLLQCLAHKATPETLEEVLELFRESKNSLLLNHIISSFPPEYICSNSTMFSNFIKDADTLSYPKYQLYSTFGVNLVLGQPPKNQILSILNDVWKVVTNFENIKDYISVAEVFIEYVLTHCSEKETDVFLKDILRHIIPDKGYETIQSHLQSIVLKIFTHISDFGKLVSFTNFLPLLDLFNGESQKQISRSTLEALSTSKVMTSDPILINTFLTYGKALHDSLNSLSFQDEVRQVTQLVVNCINKIDFGRDVEKQLNFYVECRQTFINFDGVKNRLVYGVCEICEKTLNLVKGKHTPKTTSFIRACVAYCFITIPSIDDIFLKMNLYLVSSSVALQNQALSQADALLKAAITFIQEIPPILEFKQVKSTEDWTISYVSDFISLLVVTPGHPESGPFYLVKALYKVIKEYQWESSSTAKSKLFIQLLLLCSSWAQTSLPYHIEKVESNDQLFTEDPEFNTELTEFYNSLIKEILYDLNLLKDEPDNLTQKKVGIICIDLINALLNVGELNSKTASLIFNLYNMAKKIIPSTCFNEITYLKNTLAFIGTLESKMGQDIFNKLSQQQ</sequence>
<organism>
    <name type="scientific">Dictyostelium discoideum</name>
    <name type="common">Social amoeba</name>
    <dbReference type="NCBI Taxonomy" id="44689"/>
    <lineage>
        <taxon>Eukaryota</taxon>
        <taxon>Amoebozoa</taxon>
        <taxon>Evosea</taxon>
        <taxon>Eumycetozoa</taxon>
        <taxon>Dictyostelia</taxon>
        <taxon>Dictyosteliales</taxon>
        <taxon>Dictyosteliaceae</taxon>
        <taxon>Dictyostelium</taxon>
    </lineage>
</organism>
<gene>
    <name type="ORF">DDB_G0273473</name>
</gene>
<gene>
    <name type="ORF">DDB_G0273559</name>
</gene>
<accession>Q557H3</accession>
<accession>Q86AU0</accession>
<evidence type="ECO:0000250" key="1">
    <source>
        <dbReference type="UniProtKB" id="Q7Z3J2"/>
    </source>
</evidence>
<evidence type="ECO:0000256" key="2">
    <source>
        <dbReference type="SAM" id="MobiDB-lite"/>
    </source>
</evidence>
<evidence type="ECO:0000305" key="3"/>
<reference key="1">
    <citation type="journal article" date="2002" name="Nature">
        <title>Sequence and analysis of chromosome 2 of Dictyostelium discoideum.</title>
        <authorList>
            <person name="Gloeckner G."/>
            <person name="Eichinger L."/>
            <person name="Szafranski K."/>
            <person name="Pachebat J.A."/>
            <person name="Bankier A.T."/>
            <person name="Dear P.H."/>
            <person name="Lehmann R."/>
            <person name="Baumgart C."/>
            <person name="Parra G."/>
            <person name="Abril J.F."/>
            <person name="Guigo R."/>
            <person name="Kumpf K."/>
            <person name="Tunggal B."/>
            <person name="Cox E.C."/>
            <person name="Quail M.A."/>
            <person name="Platzer M."/>
            <person name="Rosenthal A."/>
            <person name="Noegel A.A."/>
        </authorList>
    </citation>
    <scope>NUCLEOTIDE SEQUENCE [LARGE SCALE GENOMIC DNA]</scope>
    <source>
        <strain>AX4</strain>
    </source>
</reference>
<reference key="2">
    <citation type="journal article" date="2005" name="Nature">
        <title>The genome of the social amoeba Dictyostelium discoideum.</title>
        <authorList>
            <person name="Eichinger L."/>
            <person name="Pachebat J.A."/>
            <person name="Gloeckner G."/>
            <person name="Rajandream M.A."/>
            <person name="Sucgang R."/>
            <person name="Berriman M."/>
            <person name="Song J."/>
            <person name="Olsen R."/>
            <person name="Szafranski K."/>
            <person name="Xu Q."/>
            <person name="Tunggal B."/>
            <person name="Kummerfeld S."/>
            <person name="Madera M."/>
            <person name="Konfortov B.A."/>
            <person name="Rivero F."/>
            <person name="Bankier A.T."/>
            <person name="Lehmann R."/>
            <person name="Hamlin N."/>
            <person name="Davies R."/>
            <person name="Gaudet P."/>
            <person name="Fey P."/>
            <person name="Pilcher K."/>
            <person name="Chen G."/>
            <person name="Saunders D."/>
            <person name="Sodergren E.J."/>
            <person name="Davis P."/>
            <person name="Kerhornou A."/>
            <person name="Nie X."/>
            <person name="Hall N."/>
            <person name="Anjard C."/>
            <person name="Hemphill L."/>
            <person name="Bason N."/>
            <person name="Farbrother P."/>
            <person name="Desany B."/>
            <person name="Just E."/>
            <person name="Morio T."/>
            <person name="Rost R."/>
            <person name="Churcher C.M."/>
            <person name="Cooper J."/>
            <person name="Haydock S."/>
            <person name="van Driessche N."/>
            <person name="Cronin A."/>
            <person name="Goodhead I."/>
            <person name="Muzny D.M."/>
            <person name="Mourier T."/>
            <person name="Pain A."/>
            <person name="Lu M."/>
            <person name="Harper D."/>
            <person name="Lindsay R."/>
            <person name="Hauser H."/>
            <person name="James K.D."/>
            <person name="Quiles M."/>
            <person name="Madan Babu M."/>
            <person name="Saito T."/>
            <person name="Buchrieser C."/>
            <person name="Wardroper A."/>
            <person name="Felder M."/>
            <person name="Thangavelu M."/>
            <person name="Johnson D."/>
            <person name="Knights A."/>
            <person name="Loulseged H."/>
            <person name="Mungall K.L."/>
            <person name="Oliver K."/>
            <person name="Price C."/>
            <person name="Quail M.A."/>
            <person name="Urushihara H."/>
            <person name="Hernandez J."/>
            <person name="Rabbinowitsch E."/>
            <person name="Steffen D."/>
            <person name="Sanders M."/>
            <person name="Ma J."/>
            <person name="Kohara Y."/>
            <person name="Sharp S."/>
            <person name="Simmonds M.N."/>
            <person name="Spiegler S."/>
            <person name="Tivey A."/>
            <person name="Sugano S."/>
            <person name="White B."/>
            <person name="Walker D."/>
            <person name="Woodward J.R."/>
            <person name="Winckler T."/>
            <person name="Tanaka Y."/>
            <person name="Shaulsky G."/>
            <person name="Schleicher M."/>
            <person name="Weinstock G.M."/>
            <person name="Rosenthal A."/>
            <person name="Cox E.C."/>
            <person name="Chisholm R.L."/>
            <person name="Gibbs R.A."/>
            <person name="Loomis W.F."/>
            <person name="Platzer M."/>
            <person name="Kay R.R."/>
            <person name="Williams J.G."/>
            <person name="Dear P.H."/>
            <person name="Noegel A.A."/>
            <person name="Barrell B.G."/>
            <person name="Kuspa A."/>
        </authorList>
    </citation>
    <scope>NUCLEOTIDE SEQUENCE [LARGE SCALE GENOMIC DNA]</scope>
    <source>
        <strain>AX4</strain>
    </source>
</reference>
<name>VP35L_DICDI</name>
<comment type="function">
    <text evidence="1">Acts as a component of the retriever complex. The retriever complex is a heterotrimeric complex related to retromer cargo-selective complex (CSC) and essential for retromer-independent retrieval and recycling of numerous cargos.</text>
</comment>
<comment type="subunit">
    <text evidence="1">Component of the heterotrimeric retriever complex.</text>
</comment>
<comment type="subcellular location">
    <subcellularLocation>
        <location evidence="1">Endosome</location>
    </subcellularLocation>
</comment>
<comment type="similarity">
    <text evidence="3">Belongs to the VPS35L family.</text>
</comment>
<comment type="caution">
    <text evidence="3">The gene for this protein is duplicated in strains AX3 and AX4. These strains contain a duplication of a segment of 750 kb of chromosome 2 compared to the corresponding sequence in strain AX2.</text>
</comment>